<proteinExistence type="inferred from homology"/>
<evidence type="ECO:0000255" key="1">
    <source>
        <dbReference type="HAMAP-Rule" id="MF_00531"/>
    </source>
</evidence>
<evidence type="ECO:0000305" key="2"/>
<organism>
    <name type="scientific">Bacillus mycoides (strain KBAB4)</name>
    <name type="common">Bacillus weihenstephanensis</name>
    <dbReference type="NCBI Taxonomy" id="315730"/>
    <lineage>
        <taxon>Bacteria</taxon>
        <taxon>Bacillati</taxon>
        <taxon>Bacillota</taxon>
        <taxon>Bacilli</taxon>
        <taxon>Bacillales</taxon>
        <taxon>Bacillaceae</taxon>
        <taxon>Bacillus</taxon>
        <taxon>Bacillus cereus group</taxon>
    </lineage>
</organism>
<feature type="chain" id="PRO_1000127929" description="Small ribosomal subunit protein uS19">
    <location>
        <begin position="1"/>
        <end position="92"/>
    </location>
</feature>
<dbReference type="EMBL" id="CP000903">
    <property type="protein sequence ID" value="ABY41378.1"/>
    <property type="molecule type" value="Genomic_DNA"/>
</dbReference>
<dbReference type="RefSeq" id="WP_000124452.1">
    <property type="nucleotide sequence ID" value="NZ_CAKMRX030000129.1"/>
</dbReference>
<dbReference type="SMR" id="A9VP81"/>
<dbReference type="GeneID" id="87590725"/>
<dbReference type="KEGG" id="bwe:BcerKBAB4_0109"/>
<dbReference type="eggNOG" id="COG0185">
    <property type="taxonomic scope" value="Bacteria"/>
</dbReference>
<dbReference type="HOGENOM" id="CLU_144911_0_1_9"/>
<dbReference type="Proteomes" id="UP000002154">
    <property type="component" value="Chromosome"/>
</dbReference>
<dbReference type="GO" id="GO:0005737">
    <property type="term" value="C:cytoplasm"/>
    <property type="evidence" value="ECO:0007669"/>
    <property type="project" value="UniProtKB-ARBA"/>
</dbReference>
<dbReference type="GO" id="GO:0015935">
    <property type="term" value="C:small ribosomal subunit"/>
    <property type="evidence" value="ECO:0007669"/>
    <property type="project" value="InterPro"/>
</dbReference>
<dbReference type="GO" id="GO:0019843">
    <property type="term" value="F:rRNA binding"/>
    <property type="evidence" value="ECO:0007669"/>
    <property type="project" value="UniProtKB-UniRule"/>
</dbReference>
<dbReference type="GO" id="GO:0003735">
    <property type="term" value="F:structural constituent of ribosome"/>
    <property type="evidence" value="ECO:0007669"/>
    <property type="project" value="InterPro"/>
</dbReference>
<dbReference type="GO" id="GO:0000028">
    <property type="term" value="P:ribosomal small subunit assembly"/>
    <property type="evidence" value="ECO:0007669"/>
    <property type="project" value="TreeGrafter"/>
</dbReference>
<dbReference type="GO" id="GO:0006412">
    <property type="term" value="P:translation"/>
    <property type="evidence" value="ECO:0007669"/>
    <property type="project" value="UniProtKB-UniRule"/>
</dbReference>
<dbReference type="FunFam" id="3.30.860.10:FF:000001">
    <property type="entry name" value="30S ribosomal protein S19"/>
    <property type="match status" value="1"/>
</dbReference>
<dbReference type="Gene3D" id="3.30.860.10">
    <property type="entry name" value="30s Ribosomal Protein S19, Chain A"/>
    <property type="match status" value="1"/>
</dbReference>
<dbReference type="HAMAP" id="MF_00531">
    <property type="entry name" value="Ribosomal_uS19"/>
    <property type="match status" value="1"/>
</dbReference>
<dbReference type="InterPro" id="IPR002222">
    <property type="entry name" value="Ribosomal_uS19"/>
</dbReference>
<dbReference type="InterPro" id="IPR005732">
    <property type="entry name" value="Ribosomal_uS19_bac-type"/>
</dbReference>
<dbReference type="InterPro" id="IPR020934">
    <property type="entry name" value="Ribosomal_uS19_CS"/>
</dbReference>
<dbReference type="InterPro" id="IPR023575">
    <property type="entry name" value="Ribosomal_uS19_SF"/>
</dbReference>
<dbReference type="NCBIfam" id="TIGR01050">
    <property type="entry name" value="rpsS_bact"/>
    <property type="match status" value="1"/>
</dbReference>
<dbReference type="PANTHER" id="PTHR11880">
    <property type="entry name" value="RIBOSOMAL PROTEIN S19P FAMILY MEMBER"/>
    <property type="match status" value="1"/>
</dbReference>
<dbReference type="PANTHER" id="PTHR11880:SF8">
    <property type="entry name" value="SMALL RIBOSOMAL SUBUNIT PROTEIN US19M"/>
    <property type="match status" value="1"/>
</dbReference>
<dbReference type="Pfam" id="PF00203">
    <property type="entry name" value="Ribosomal_S19"/>
    <property type="match status" value="1"/>
</dbReference>
<dbReference type="PIRSF" id="PIRSF002144">
    <property type="entry name" value="Ribosomal_S19"/>
    <property type="match status" value="1"/>
</dbReference>
<dbReference type="PRINTS" id="PR00975">
    <property type="entry name" value="RIBOSOMALS19"/>
</dbReference>
<dbReference type="SUPFAM" id="SSF54570">
    <property type="entry name" value="Ribosomal protein S19"/>
    <property type="match status" value="1"/>
</dbReference>
<dbReference type="PROSITE" id="PS00323">
    <property type="entry name" value="RIBOSOMAL_S19"/>
    <property type="match status" value="1"/>
</dbReference>
<name>RS19_BACMK</name>
<keyword id="KW-0687">Ribonucleoprotein</keyword>
<keyword id="KW-0689">Ribosomal protein</keyword>
<keyword id="KW-0694">RNA-binding</keyword>
<keyword id="KW-0699">rRNA-binding</keyword>
<reference key="1">
    <citation type="journal article" date="2008" name="Chem. Biol. Interact.">
        <title>Extending the Bacillus cereus group genomics to putative food-borne pathogens of different toxicity.</title>
        <authorList>
            <person name="Lapidus A."/>
            <person name="Goltsman E."/>
            <person name="Auger S."/>
            <person name="Galleron N."/>
            <person name="Segurens B."/>
            <person name="Dossat C."/>
            <person name="Land M.L."/>
            <person name="Broussolle V."/>
            <person name="Brillard J."/>
            <person name="Guinebretiere M.-H."/>
            <person name="Sanchis V."/>
            <person name="Nguen-the C."/>
            <person name="Lereclus D."/>
            <person name="Richardson P."/>
            <person name="Wincker P."/>
            <person name="Weissenbach J."/>
            <person name="Ehrlich S.D."/>
            <person name="Sorokin A."/>
        </authorList>
    </citation>
    <scope>NUCLEOTIDE SEQUENCE [LARGE SCALE GENOMIC DNA]</scope>
    <source>
        <strain>KBAB4</strain>
    </source>
</reference>
<sequence>MARSLKKGPFVDDHLMNKMEKLVASEQKQVVKTWSRRSTIFPQFIGHTIAVYDGRKHVPVYITEDMVGHKLGEFAPTRTYKGHLADDKKTRR</sequence>
<gene>
    <name evidence="1" type="primary">rpsS</name>
    <name type="ordered locus">BcerKBAB4_0109</name>
</gene>
<accession>A9VP81</accession>
<comment type="function">
    <text evidence="1">Protein S19 forms a complex with S13 that binds strongly to the 16S ribosomal RNA.</text>
</comment>
<comment type="similarity">
    <text evidence="1">Belongs to the universal ribosomal protein uS19 family.</text>
</comment>
<protein>
    <recommendedName>
        <fullName evidence="1">Small ribosomal subunit protein uS19</fullName>
    </recommendedName>
    <alternativeName>
        <fullName evidence="2">30S ribosomal protein S19</fullName>
    </alternativeName>
</protein>